<sequence length="334" mass="38498">MIKTFIKERGSWILIIIFLQCFTVFIAYLDSAIPLAPVFYSVFLSSMIFLFFLAVRYKKETTFYRKLEEWDKDLDVTNLAAAESPFERIIEQTIVKQTGYLQEKAHRHETALEQEKDDLLAWIHEIKTPLTAMHLIIDRLEDRTIKGQLTYEWMRIHLLLDQQLHQKRIPFMENDLYVEKVNLESVLHQEIKTLQSWCIQKGIGFDLQLEVTDVLTDAKWLSFILRQLLSNAVKYSEASDIIIKSDVVSGKTVVEVTDFGRGIEPKDLPRIFEKGFTSTKTDQTNGATGMGLYLAKRVAEPLLIDLAVSSTVGEGTTFTLTFPKENEFVRTLGM</sequence>
<comment type="function">
    <text evidence="1">Member of the two-component regulatory system BceS/BceR involved in the regulation of bacitracin resistance. Activates BceR in response to extracellular bacitracin (By similarity).</text>
</comment>
<comment type="catalytic activity">
    <reaction>
        <text>ATP + protein L-histidine = ADP + protein N-phospho-L-histidine.</text>
        <dbReference type="EC" id="2.7.13.3"/>
    </reaction>
</comment>
<comment type="subcellular location">
    <subcellularLocation>
        <location evidence="4">Cell membrane</location>
        <topology evidence="4">Multi-pass membrane protein</topology>
    </subcellularLocation>
</comment>
<comment type="sequence caution" evidence="4">
    <conflict type="erroneous initiation">
        <sequence resource="EMBL-CDS" id="BAA75355"/>
    </conflict>
</comment>
<organism>
    <name type="scientific">Halalkalibacterium halodurans (strain ATCC BAA-125 / DSM 18197 / FERM 7344 / JCM 9153 / C-125)</name>
    <name type="common">Bacillus halodurans</name>
    <dbReference type="NCBI Taxonomy" id="272558"/>
    <lineage>
        <taxon>Bacteria</taxon>
        <taxon>Bacillati</taxon>
        <taxon>Bacillota</taxon>
        <taxon>Bacilli</taxon>
        <taxon>Bacillales</taxon>
        <taxon>Bacillaceae</taxon>
        <taxon>Halalkalibacterium (ex Joshi et al. 2022)</taxon>
    </lineage>
</organism>
<protein>
    <recommendedName>
        <fullName>Sensor protein BceS</fullName>
        <ecNumber>2.7.13.3</ecNumber>
    </recommendedName>
</protein>
<gene>
    <name type="primary">bceS</name>
    <name type="ordered locus">BH3912</name>
</gene>
<evidence type="ECO:0000250" key="1"/>
<evidence type="ECO:0000255" key="2"/>
<evidence type="ECO:0000255" key="3">
    <source>
        <dbReference type="PROSITE-ProRule" id="PRU00107"/>
    </source>
</evidence>
<evidence type="ECO:0000305" key="4"/>
<dbReference type="EC" id="2.7.13.3"/>
<dbReference type="EMBL" id="BA000004">
    <property type="protein sequence ID" value="BAB07631.1"/>
    <property type="molecule type" value="Genomic_DNA"/>
</dbReference>
<dbReference type="EMBL" id="AB011838">
    <property type="protein sequence ID" value="BAA75355.1"/>
    <property type="status" value="ALT_INIT"/>
    <property type="molecule type" value="Genomic_DNA"/>
</dbReference>
<dbReference type="PIR" id="H84138">
    <property type="entry name" value="H84138"/>
</dbReference>
<dbReference type="RefSeq" id="WP_010900037.1">
    <property type="nucleotide sequence ID" value="NC_002570.2"/>
</dbReference>
<dbReference type="SMR" id="Q9K620"/>
<dbReference type="STRING" id="272558.gene:10729825"/>
<dbReference type="KEGG" id="bha:BH3912"/>
<dbReference type="eggNOG" id="COG0642">
    <property type="taxonomic scope" value="Bacteria"/>
</dbReference>
<dbReference type="HOGENOM" id="CLU_000445_13_1_9"/>
<dbReference type="OrthoDB" id="9780487at2"/>
<dbReference type="Proteomes" id="UP000001258">
    <property type="component" value="Chromosome"/>
</dbReference>
<dbReference type="GO" id="GO:0005886">
    <property type="term" value="C:plasma membrane"/>
    <property type="evidence" value="ECO:0007669"/>
    <property type="project" value="UniProtKB-SubCell"/>
</dbReference>
<dbReference type="GO" id="GO:0005524">
    <property type="term" value="F:ATP binding"/>
    <property type="evidence" value="ECO:0007669"/>
    <property type="project" value="UniProtKB-KW"/>
</dbReference>
<dbReference type="GO" id="GO:0004721">
    <property type="term" value="F:phosphoprotein phosphatase activity"/>
    <property type="evidence" value="ECO:0007669"/>
    <property type="project" value="TreeGrafter"/>
</dbReference>
<dbReference type="GO" id="GO:0000155">
    <property type="term" value="F:phosphorelay sensor kinase activity"/>
    <property type="evidence" value="ECO:0007669"/>
    <property type="project" value="InterPro"/>
</dbReference>
<dbReference type="GO" id="GO:0016036">
    <property type="term" value="P:cellular response to phosphate starvation"/>
    <property type="evidence" value="ECO:0007669"/>
    <property type="project" value="TreeGrafter"/>
</dbReference>
<dbReference type="CDD" id="cd00082">
    <property type="entry name" value="HisKA"/>
    <property type="match status" value="1"/>
</dbReference>
<dbReference type="Gene3D" id="3.30.565.10">
    <property type="entry name" value="Histidine kinase-like ATPase, C-terminal domain"/>
    <property type="match status" value="1"/>
</dbReference>
<dbReference type="InterPro" id="IPR050351">
    <property type="entry name" value="2-comp_sensor_kinase"/>
</dbReference>
<dbReference type="InterPro" id="IPR036890">
    <property type="entry name" value="HATPase_C_sf"/>
</dbReference>
<dbReference type="InterPro" id="IPR005467">
    <property type="entry name" value="His_kinase_dom"/>
</dbReference>
<dbReference type="InterPro" id="IPR003661">
    <property type="entry name" value="HisK_dim/P_dom"/>
</dbReference>
<dbReference type="InterPro" id="IPR036097">
    <property type="entry name" value="HisK_dim/P_sf"/>
</dbReference>
<dbReference type="InterPro" id="IPR004358">
    <property type="entry name" value="Sig_transdc_His_kin-like_C"/>
</dbReference>
<dbReference type="PANTHER" id="PTHR45453:SF2">
    <property type="entry name" value="HISTIDINE KINASE"/>
    <property type="match status" value="1"/>
</dbReference>
<dbReference type="PANTHER" id="PTHR45453">
    <property type="entry name" value="PHOSPHATE REGULON SENSOR PROTEIN PHOR"/>
    <property type="match status" value="1"/>
</dbReference>
<dbReference type="Pfam" id="PF02518">
    <property type="entry name" value="HATPase_c"/>
    <property type="match status" value="1"/>
</dbReference>
<dbReference type="PRINTS" id="PR00344">
    <property type="entry name" value="BCTRLSENSOR"/>
</dbReference>
<dbReference type="SMART" id="SM00387">
    <property type="entry name" value="HATPase_c"/>
    <property type="match status" value="1"/>
</dbReference>
<dbReference type="SUPFAM" id="SSF55874">
    <property type="entry name" value="ATPase domain of HSP90 chaperone/DNA topoisomerase II/histidine kinase"/>
    <property type="match status" value="1"/>
</dbReference>
<dbReference type="SUPFAM" id="SSF47384">
    <property type="entry name" value="Homodimeric domain of signal transducing histidine kinase"/>
    <property type="match status" value="1"/>
</dbReference>
<dbReference type="PROSITE" id="PS50109">
    <property type="entry name" value="HIS_KIN"/>
    <property type="match status" value="1"/>
</dbReference>
<feature type="chain" id="PRO_0000074708" description="Sensor protein BceS">
    <location>
        <begin position="1"/>
        <end position="334"/>
    </location>
</feature>
<feature type="transmembrane region" description="Helical" evidence="2">
    <location>
        <begin position="13"/>
        <end position="33"/>
    </location>
</feature>
<feature type="transmembrane region" description="Helical" evidence="2">
    <location>
        <begin position="35"/>
        <end position="55"/>
    </location>
</feature>
<feature type="domain" description="Histidine kinase" evidence="3">
    <location>
        <begin position="121"/>
        <end position="326"/>
    </location>
</feature>
<feature type="modified residue" description="Phosphohistidine; by autocatalysis" evidence="3">
    <location>
        <position position="124"/>
    </location>
</feature>
<feature type="sequence conflict" description="In Ref. 2." evidence="4" ref="2">
    <original>VRYKKE</original>
    <variation>CDIRAQ</variation>
    <location>
        <begin position="55"/>
        <end position="60"/>
    </location>
</feature>
<name>BCES_HALH5</name>
<proteinExistence type="inferred from homology"/>
<accession>Q9K620</accession>
<accession>Q9Z9S7</accession>
<keyword id="KW-0067">ATP-binding</keyword>
<keyword id="KW-1003">Cell membrane</keyword>
<keyword id="KW-0418">Kinase</keyword>
<keyword id="KW-0472">Membrane</keyword>
<keyword id="KW-0547">Nucleotide-binding</keyword>
<keyword id="KW-0597">Phosphoprotein</keyword>
<keyword id="KW-1185">Reference proteome</keyword>
<keyword id="KW-0808">Transferase</keyword>
<keyword id="KW-0812">Transmembrane</keyword>
<keyword id="KW-1133">Transmembrane helix</keyword>
<keyword id="KW-0902">Two-component regulatory system</keyword>
<reference key="1">
    <citation type="journal article" date="2000" name="Nucleic Acids Res.">
        <title>Complete genome sequence of the alkaliphilic bacterium Bacillus halodurans and genomic sequence comparison with Bacillus subtilis.</title>
        <authorList>
            <person name="Takami H."/>
            <person name="Nakasone K."/>
            <person name="Takaki Y."/>
            <person name="Maeno G."/>
            <person name="Sasaki R."/>
            <person name="Masui N."/>
            <person name="Fuji F."/>
            <person name="Hirama C."/>
            <person name="Nakamura Y."/>
            <person name="Ogasawara N."/>
            <person name="Kuhara S."/>
            <person name="Horikoshi K."/>
        </authorList>
    </citation>
    <scope>NUCLEOTIDE SEQUENCE [LARGE SCALE GENOMIC DNA]</scope>
    <source>
        <strain>ATCC BAA-125 / DSM 18197 / FERM 7344 / JCM 9153 / C-125</strain>
    </source>
</reference>
<reference key="2">
    <citation type="journal article" date="1999" name="Extremophiles">
        <title>Sequencing of three lambda clones from the genome of alkaliphilic Bacillus sp. strain C-125.</title>
        <authorList>
            <person name="Takami H."/>
            <person name="Nakasone K."/>
            <person name="Ogasawara N."/>
            <person name="Hirama C."/>
            <person name="Nakamura Y."/>
            <person name="Masui N."/>
            <person name="Fuji F."/>
            <person name="Takaki Y."/>
            <person name="Inoue A."/>
            <person name="Horikoshi K."/>
        </authorList>
    </citation>
    <scope>NUCLEOTIDE SEQUENCE [GENOMIC DNA] OF 55-334</scope>
    <source>
        <strain>ATCC BAA-125 / DSM 18197 / FERM 7344 / JCM 9153 / C-125</strain>
    </source>
</reference>